<gene>
    <name type="primary">Nek2</name>
</gene>
<feature type="chain" id="PRO_0000086422" description="Serine/threonine-protein kinase Nek2">
    <location>
        <begin position="1"/>
        <end position="443"/>
    </location>
</feature>
<feature type="domain" description="Protein kinase" evidence="4">
    <location>
        <begin position="8"/>
        <end position="271"/>
    </location>
</feature>
<feature type="region of interest" description="Interaction with PCNT" evidence="1">
    <location>
        <begin position="264"/>
        <end position="443"/>
    </location>
</feature>
<feature type="region of interest" description="Disordered" evidence="6">
    <location>
        <begin position="282"/>
        <end position="303"/>
    </location>
</feature>
<feature type="region of interest" description="Interaction with CEP85" evidence="2">
    <location>
        <begin position="301"/>
        <end position="443"/>
    </location>
</feature>
<feature type="region of interest" description="Leucine-zipper">
    <location>
        <begin position="306"/>
        <end position="334"/>
    </location>
</feature>
<feature type="region of interest" description="Necessary for interaction with MAD1L1" evidence="1">
    <location>
        <begin position="329"/>
        <end position="443"/>
    </location>
</feature>
<feature type="region of interest" description="Required for microtubule binding and for localization to the centrosomes" evidence="1">
    <location>
        <begin position="333"/>
        <end position="370"/>
    </location>
</feature>
<feature type="region of interest" description="Disordered" evidence="6">
    <location>
        <begin position="383"/>
        <end position="402"/>
    </location>
</feature>
<feature type="region of interest" description="Interaction with SAV1 and STK3/MST2" evidence="1">
    <location>
        <begin position="402"/>
        <end position="437"/>
    </location>
</feature>
<feature type="coiled-coil region" evidence="3">
    <location>
        <begin position="303"/>
        <end position="361"/>
    </location>
</feature>
<feature type="coiled-coil region" evidence="3">
    <location>
        <begin position="403"/>
        <end position="427"/>
    </location>
</feature>
<feature type="compositionally biased region" description="Basic and acidic residues" evidence="6">
    <location>
        <begin position="282"/>
        <end position="292"/>
    </location>
</feature>
<feature type="compositionally biased region" description="Basic and acidic residues" evidence="6">
    <location>
        <begin position="385"/>
        <end position="398"/>
    </location>
</feature>
<feature type="active site" description="Proton acceptor" evidence="4 5">
    <location>
        <position position="141"/>
    </location>
</feature>
<feature type="binding site" evidence="4">
    <location>
        <begin position="14"/>
        <end position="22"/>
    </location>
    <ligand>
        <name>ATP</name>
        <dbReference type="ChEBI" id="CHEBI:30616"/>
    </ligand>
</feature>
<feature type="binding site" evidence="4">
    <location>
        <position position="37"/>
    </location>
    <ligand>
        <name>ATP</name>
        <dbReference type="ChEBI" id="CHEBI:30616"/>
    </ligand>
</feature>
<feature type="modified residue" description="Phosphothreonine; by autocatalysis" evidence="2">
    <location>
        <position position="170"/>
    </location>
</feature>
<feature type="modified residue" description="Phosphoserine; by autocatalysis" evidence="2">
    <location>
        <position position="171"/>
    </location>
</feature>
<feature type="modified residue" description="Phosphothreonine; by autocatalysis" evidence="2">
    <location>
        <position position="175"/>
    </location>
</feature>
<feature type="modified residue" description="Phosphothreonine; by autocatalysis" evidence="2">
    <location>
        <position position="179"/>
    </location>
</feature>
<feature type="modified residue" description="Phosphoserine" evidence="2">
    <location>
        <position position="184"/>
    </location>
</feature>
<feature type="modified residue" description="Phosphoserine; by autocatalysis" evidence="2">
    <location>
        <position position="241"/>
    </location>
</feature>
<feature type="modified residue" description="Phosphoserine" evidence="2">
    <location>
        <position position="300"/>
    </location>
</feature>
<feature type="modified residue" description="Phosphoserine; by STK3/MST2" evidence="2">
    <location>
        <position position="356"/>
    </location>
</feature>
<feature type="modified residue" description="Phosphoserine" evidence="2">
    <location>
        <position position="389"/>
    </location>
</feature>
<feature type="modified residue" description="Phosphoserine" evidence="2">
    <location>
        <position position="396"/>
    </location>
</feature>
<feature type="modified residue" description="Phosphoserine" evidence="2">
    <location>
        <position position="401"/>
    </location>
</feature>
<feature type="modified residue" description="Phosphoserine; by STK3/MST2" evidence="2">
    <location>
        <position position="436"/>
    </location>
</feature>
<feature type="sequence conflict" description="In Ref. 1; AAB67973, 2; AAC35393 and 3; AAB70470." evidence="11" ref="1 2 3">
    <original>S</original>
    <variation>R</variation>
    <location>
        <position position="69"/>
    </location>
</feature>
<feature type="sequence conflict" description="In Ref. 1; AAB67973." evidence="11" ref="1">
    <original>G</original>
    <variation>A</variation>
    <location>
        <position position="203"/>
    </location>
</feature>
<feature type="sequence conflict" description="In Ref. 1; AAB67973." evidence="11" ref="1">
    <original>N</original>
    <variation>F</variation>
    <location>
        <position position="253"/>
    </location>
</feature>
<feature type="sequence conflict" description="In Ref. 1; AAB67973, 2; AAC35393 and 3; AAB70470." evidence="11" ref="1 2 3">
    <original>L</original>
    <variation>M</variation>
    <location>
        <position position="274"/>
    </location>
</feature>
<feature type="sequence conflict" description="In Ref. 1; AAB67973." evidence="11" ref="1">
    <original>R</original>
    <variation>S</variation>
    <location>
        <position position="311"/>
    </location>
</feature>
<organism>
    <name type="scientific">Mus musculus</name>
    <name type="common">Mouse</name>
    <dbReference type="NCBI Taxonomy" id="10090"/>
    <lineage>
        <taxon>Eukaryota</taxon>
        <taxon>Metazoa</taxon>
        <taxon>Chordata</taxon>
        <taxon>Craniata</taxon>
        <taxon>Vertebrata</taxon>
        <taxon>Euteleostomi</taxon>
        <taxon>Mammalia</taxon>
        <taxon>Eutheria</taxon>
        <taxon>Euarchontoglires</taxon>
        <taxon>Glires</taxon>
        <taxon>Rodentia</taxon>
        <taxon>Myomorpha</taxon>
        <taxon>Muroidea</taxon>
        <taxon>Muridae</taxon>
        <taxon>Murinae</taxon>
        <taxon>Mus</taxon>
        <taxon>Mus</taxon>
    </lineage>
</organism>
<keyword id="KW-0067">ATP-binding</keyword>
<keyword id="KW-0131">Cell cycle</keyword>
<keyword id="KW-0132">Cell division</keyword>
<keyword id="KW-0137">Centromere</keyword>
<keyword id="KW-0158">Chromosome</keyword>
<keyword id="KW-0159">Chromosome partition</keyword>
<keyword id="KW-0175">Coiled coil</keyword>
<keyword id="KW-0963">Cytoplasm</keyword>
<keyword id="KW-0206">Cytoskeleton</keyword>
<keyword id="KW-0418">Kinase</keyword>
<keyword id="KW-0995">Kinetochore</keyword>
<keyword id="KW-0460">Magnesium</keyword>
<keyword id="KW-0469">Meiosis</keyword>
<keyword id="KW-0479">Metal-binding</keyword>
<keyword id="KW-0493">Microtubule</keyword>
<keyword id="KW-0498">Mitosis</keyword>
<keyword id="KW-0547">Nucleotide-binding</keyword>
<keyword id="KW-0539">Nucleus</keyword>
<keyword id="KW-0597">Phosphoprotein</keyword>
<keyword id="KW-1185">Reference proteome</keyword>
<keyword id="KW-0723">Serine/threonine-protein kinase</keyword>
<keyword id="KW-0808">Transferase</keyword>
<proteinExistence type="evidence at protein level"/>
<protein>
    <recommendedName>
        <fullName>Serine/threonine-protein kinase Nek2</fullName>
        <ecNumber>2.7.11.1</ecNumber>
    </recommendedName>
    <alternativeName>
        <fullName>Never in mitosis A-related kinase 2</fullName>
        <shortName>NimA-related protein kinase 2</shortName>
    </alternativeName>
</protein>
<name>NEK2_MOUSE</name>
<dbReference type="EC" id="2.7.11.1"/>
<dbReference type="EMBL" id="U95610">
    <property type="protein sequence ID" value="AAB67973.1"/>
    <property type="molecule type" value="mRNA"/>
</dbReference>
<dbReference type="EMBL" id="AF013166">
    <property type="protein sequence ID" value="AAC35393.1"/>
    <property type="molecule type" value="mRNA"/>
</dbReference>
<dbReference type="EMBL" id="AF007247">
    <property type="protein sequence ID" value="AAB70470.1"/>
    <property type="molecule type" value="mRNA"/>
</dbReference>
<dbReference type="EMBL" id="AK147072">
    <property type="protein sequence ID" value="BAE27653.1"/>
    <property type="molecule type" value="mRNA"/>
</dbReference>
<dbReference type="EMBL" id="AK164467">
    <property type="protein sequence ID" value="BAE37799.1"/>
    <property type="molecule type" value="mRNA"/>
</dbReference>
<dbReference type="CCDS" id="CCDS15623.1"/>
<dbReference type="RefSeq" id="NP_035022.2">
    <property type="nucleotide sequence ID" value="NM_010892.4"/>
</dbReference>
<dbReference type="SMR" id="O35942"/>
<dbReference type="BioGRID" id="201728">
    <property type="interactions" value="38"/>
</dbReference>
<dbReference type="FunCoup" id="O35942">
    <property type="interactions" value="1136"/>
</dbReference>
<dbReference type="IntAct" id="O35942">
    <property type="interactions" value="37"/>
</dbReference>
<dbReference type="STRING" id="10090.ENSMUSP00000027931"/>
<dbReference type="iPTMnet" id="O35942"/>
<dbReference type="PhosphoSitePlus" id="O35942"/>
<dbReference type="PaxDb" id="10090-ENSMUSP00000027931"/>
<dbReference type="ProteomicsDB" id="252945"/>
<dbReference type="Antibodypedia" id="4308">
    <property type="antibodies" value="468 antibodies from 38 providers"/>
</dbReference>
<dbReference type="DNASU" id="18005"/>
<dbReference type="Ensembl" id="ENSMUST00000027931.8">
    <property type="protein sequence ID" value="ENSMUSP00000027931.8"/>
    <property type="gene ID" value="ENSMUSG00000026622.16"/>
</dbReference>
<dbReference type="GeneID" id="18005"/>
<dbReference type="KEGG" id="mmu:18005"/>
<dbReference type="UCSC" id="uc007ecx.2">
    <property type="organism name" value="mouse"/>
</dbReference>
<dbReference type="AGR" id="MGI:109359"/>
<dbReference type="CTD" id="4751"/>
<dbReference type="MGI" id="MGI:109359">
    <property type="gene designation" value="Nek2"/>
</dbReference>
<dbReference type="VEuPathDB" id="HostDB:ENSMUSG00000026622"/>
<dbReference type="eggNOG" id="KOG1826">
    <property type="taxonomic scope" value="Eukaryota"/>
</dbReference>
<dbReference type="GeneTree" id="ENSGT00940000156989"/>
<dbReference type="HOGENOM" id="CLU_000288_63_23_1"/>
<dbReference type="InParanoid" id="O35942"/>
<dbReference type="OMA" id="LALHRCH"/>
<dbReference type="OrthoDB" id="248923at2759"/>
<dbReference type="PhylomeDB" id="O35942"/>
<dbReference type="TreeFam" id="TF101184"/>
<dbReference type="Reactome" id="R-MMU-179409">
    <property type="pathway name" value="APC-Cdc20 mediated degradation of Nek2A"/>
</dbReference>
<dbReference type="Reactome" id="R-MMU-2565942">
    <property type="pathway name" value="Regulation of PLK1 Activity at G2/M Transition"/>
</dbReference>
<dbReference type="Reactome" id="R-MMU-380259">
    <property type="pathway name" value="Loss of Nlp from mitotic centrosomes"/>
</dbReference>
<dbReference type="Reactome" id="R-MMU-380270">
    <property type="pathway name" value="Recruitment of mitotic centrosome proteins and complexes"/>
</dbReference>
<dbReference type="Reactome" id="R-MMU-380284">
    <property type="pathway name" value="Loss of proteins required for interphase microtubule organization from the centrosome"/>
</dbReference>
<dbReference type="Reactome" id="R-MMU-380320">
    <property type="pathway name" value="Recruitment of NuMA to mitotic centrosomes"/>
</dbReference>
<dbReference type="Reactome" id="R-MMU-5620912">
    <property type="pathway name" value="Anchoring of the basal body to the plasma membrane"/>
</dbReference>
<dbReference type="Reactome" id="R-MMU-8854518">
    <property type="pathway name" value="AURKA Activation by TPX2"/>
</dbReference>
<dbReference type="BioGRID-ORCS" id="18005">
    <property type="hits" value="3 hits in 82 CRISPR screens"/>
</dbReference>
<dbReference type="CD-CODE" id="01CA17F3">
    <property type="entry name" value="Centrosome"/>
</dbReference>
<dbReference type="ChiTaRS" id="Nek2">
    <property type="organism name" value="mouse"/>
</dbReference>
<dbReference type="PRO" id="PR:O35942"/>
<dbReference type="Proteomes" id="UP000000589">
    <property type="component" value="Chromosome 1"/>
</dbReference>
<dbReference type="RNAct" id="O35942">
    <property type="molecule type" value="protein"/>
</dbReference>
<dbReference type="Bgee" id="ENSMUSG00000026622">
    <property type="expression patterns" value="Expressed in spermatocyte and 65 other cell types or tissues"/>
</dbReference>
<dbReference type="GO" id="GO:0005813">
    <property type="term" value="C:centrosome"/>
    <property type="evidence" value="ECO:0000250"/>
    <property type="project" value="UniProtKB"/>
</dbReference>
<dbReference type="GO" id="GO:0036064">
    <property type="term" value="C:ciliary basal body"/>
    <property type="evidence" value="ECO:0007669"/>
    <property type="project" value="Ensembl"/>
</dbReference>
<dbReference type="GO" id="GO:0000794">
    <property type="term" value="C:condensed nuclear chromosome"/>
    <property type="evidence" value="ECO:0000314"/>
    <property type="project" value="MGI"/>
</dbReference>
<dbReference type="GO" id="GO:0005737">
    <property type="term" value="C:cytoplasm"/>
    <property type="evidence" value="ECO:0007669"/>
    <property type="project" value="UniProtKB-SubCell"/>
</dbReference>
<dbReference type="GO" id="GO:0045171">
    <property type="term" value="C:intercellular bridge"/>
    <property type="evidence" value="ECO:0007669"/>
    <property type="project" value="Ensembl"/>
</dbReference>
<dbReference type="GO" id="GO:0000776">
    <property type="term" value="C:kinetochore"/>
    <property type="evidence" value="ECO:0007669"/>
    <property type="project" value="UniProtKB-KW"/>
</dbReference>
<dbReference type="GO" id="GO:0005874">
    <property type="term" value="C:microtubule"/>
    <property type="evidence" value="ECO:0007669"/>
    <property type="project" value="UniProtKB-KW"/>
</dbReference>
<dbReference type="GO" id="GO:0030496">
    <property type="term" value="C:midbody"/>
    <property type="evidence" value="ECO:0000314"/>
    <property type="project" value="MGI"/>
</dbReference>
<dbReference type="GO" id="GO:0005730">
    <property type="term" value="C:nucleolus"/>
    <property type="evidence" value="ECO:0007669"/>
    <property type="project" value="UniProtKB-SubCell"/>
</dbReference>
<dbReference type="GO" id="GO:0005654">
    <property type="term" value="C:nucleoplasm"/>
    <property type="evidence" value="ECO:0007669"/>
    <property type="project" value="Ensembl"/>
</dbReference>
<dbReference type="GO" id="GO:0005886">
    <property type="term" value="C:plasma membrane"/>
    <property type="evidence" value="ECO:0007669"/>
    <property type="project" value="Ensembl"/>
</dbReference>
<dbReference type="GO" id="GO:0032991">
    <property type="term" value="C:protein-containing complex"/>
    <property type="evidence" value="ECO:0007669"/>
    <property type="project" value="Ensembl"/>
</dbReference>
<dbReference type="GO" id="GO:0000922">
    <property type="term" value="C:spindle pole"/>
    <property type="evidence" value="ECO:0000314"/>
    <property type="project" value="MGI"/>
</dbReference>
<dbReference type="GO" id="GO:0005524">
    <property type="term" value="F:ATP binding"/>
    <property type="evidence" value="ECO:0007669"/>
    <property type="project" value="UniProtKB-KW"/>
</dbReference>
<dbReference type="GO" id="GO:0046872">
    <property type="term" value="F:metal ion binding"/>
    <property type="evidence" value="ECO:0007669"/>
    <property type="project" value="UniProtKB-KW"/>
</dbReference>
<dbReference type="GO" id="GO:0004672">
    <property type="term" value="F:protein kinase activity"/>
    <property type="evidence" value="ECO:0000314"/>
    <property type="project" value="MGI"/>
</dbReference>
<dbReference type="GO" id="GO:0019903">
    <property type="term" value="F:protein phosphatase binding"/>
    <property type="evidence" value="ECO:0007669"/>
    <property type="project" value="Ensembl"/>
</dbReference>
<dbReference type="GO" id="GO:0106310">
    <property type="term" value="F:protein serine kinase activity"/>
    <property type="evidence" value="ECO:0007669"/>
    <property type="project" value="RHEA"/>
</dbReference>
<dbReference type="GO" id="GO:0004674">
    <property type="term" value="F:protein serine/threonine kinase activity"/>
    <property type="evidence" value="ECO:0007669"/>
    <property type="project" value="UniProtKB-KW"/>
</dbReference>
<dbReference type="GO" id="GO:0001824">
    <property type="term" value="P:blastocyst development"/>
    <property type="evidence" value="ECO:0000315"/>
    <property type="project" value="MGI"/>
</dbReference>
<dbReference type="GO" id="GO:0051301">
    <property type="term" value="P:cell division"/>
    <property type="evidence" value="ECO:0007669"/>
    <property type="project" value="UniProtKB-KW"/>
</dbReference>
<dbReference type="GO" id="GO:0051299">
    <property type="term" value="P:centrosome separation"/>
    <property type="evidence" value="ECO:0007669"/>
    <property type="project" value="Ensembl"/>
</dbReference>
<dbReference type="GO" id="GO:0007059">
    <property type="term" value="P:chromosome segregation"/>
    <property type="evidence" value="ECO:0000315"/>
    <property type="project" value="MGI"/>
</dbReference>
<dbReference type="GO" id="GO:0051321">
    <property type="term" value="P:meiotic cell cycle"/>
    <property type="evidence" value="ECO:0007669"/>
    <property type="project" value="UniProtKB-KW"/>
</dbReference>
<dbReference type="GO" id="GO:0000070">
    <property type="term" value="P:mitotic sister chromatid segregation"/>
    <property type="evidence" value="ECO:0000315"/>
    <property type="project" value="MGI"/>
</dbReference>
<dbReference type="GO" id="GO:0090307">
    <property type="term" value="P:mitotic spindle assembly"/>
    <property type="evidence" value="ECO:0000315"/>
    <property type="project" value="MGI"/>
</dbReference>
<dbReference type="GO" id="GO:1903126">
    <property type="term" value="P:negative regulation of centriole-centriole cohesion"/>
    <property type="evidence" value="ECO:0007669"/>
    <property type="project" value="Ensembl"/>
</dbReference>
<dbReference type="GO" id="GO:0032206">
    <property type="term" value="P:positive regulation of telomere maintenance"/>
    <property type="evidence" value="ECO:0007669"/>
    <property type="project" value="Ensembl"/>
</dbReference>
<dbReference type="GO" id="GO:0046777">
    <property type="term" value="P:protein autophosphorylation"/>
    <property type="evidence" value="ECO:0000250"/>
    <property type="project" value="UniProtKB"/>
</dbReference>
<dbReference type="GO" id="GO:0051988">
    <property type="term" value="P:regulation of attachment of spindle microtubules to kinetochore"/>
    <property type="evidence" value="ECO:0000250"/>
    <property type="project" value="UniProtKB"/>
</dbReference>
<dbReference type="GO" id="GO:0046602">
    <property type="term" value="P:regulation of mitotic centrosome separation"/>
    <property type="evidence" value="ECO:0000250"/>
    <property type="project" value="UniProtKB"/>
</dbReference>
<dbReference type="CDD" id="cd08217">
    <property type="entry name" value="STKc_Nek2"/>
    <property type="match status" value="1"/>
</dbReference>
<dbReference type="FunFam" id="3.30.200.20:FF:000151">
    <property type="entry name" value="G2-specific protein kinase nimA"/>
    <property type="match status" value="1"/>
</dbReference>
<dbReference type="FunFam" id="1.10.510.10:FF:000356">
    <property type="entry name" value="Serine/threonine-protein kinase Nek2"/>
    <property type="match status" value="1"/>
</dbReference>
<dbReference type="FunFam" id="3.30.200.20:FF:000310">
    <property type="entry name" value="serine/threonine-protein kinase Nek2"/>
    <property type="match status" value="1"/>
</dbReference>
<dbReference type="Gene3D" id="3.30.200.20">
    <property type="entry name" value="Phosphorylase Kinase, domain 1"/>
    <property type="match status" value="2"/>
</dbReference>
<dbReference type="Gene3D" id="1.10.510.10">
    <property type="entry name" value="Transferase(Phosphotransferase) domain 1"/>
    <property type="match status" value="1"/>
</dbReference>
<dbReference type="InterPro" id="IPR011009">
    <property type="entry name" value="Kinase-like_dom_sf"/>
</dbReference>
<dbReference type="InterPro" id="IPR051131">
    <property type="entry name" value="NEK_Ser/Thr_kinase_NIMA"/>
</dbReference>
<dbReference type="InterPro" id="IPR000719">
    <property type="entry name" value="Prot_kinase_dom"/>
</dbReference>
<dbReference type="InterPro" id="IPR008271">
    <property type="entry name" value="Ser/Thr_kinase_AS"/>
</dbReference>
<dbReference type="PANTHER" id="PTHR44899">
    <property type="entry name" value="CAMK FAMILY PROTEIN KINASE"/>
    <property type="match status" value="1"/>
</dbReference>
<dbReference type="PANTHER" id="PTHR44899:SF10">
    <property type="entry name" value="NIMA-RELATED KINASE 2"/>
    <property type="match status" value="1"/>
</dbReference>
<dbReference type="Pfam" id="PF00069">
    <property type="entry name" value="Pkinase"/>
    <property type="match status" value="1"/>
</dbReference>
<dbReference type="SMART" id="SM00220">
    <property type="entry name" value="S_TKc"/>
    <property type="match status" value="1"/>
</dbReference>
<dbReference type="SUPFAM" id="SSF56112">
    <property type="entry name" value="Protein kinase-like (PK-like)"/>
    <property type="match status" value="1"/>
</dbReference>
<dbReference type="PROSITE" id="PS50011">
    <property type="entry name" value="PROTEIN_KINASE_DOM"/>
    <property type="match status" value="1"/>
</dbReference>
<dbReference type="PROSITE" id="PS00108">
    <property type="entry name" value="PROTEIN_KINASE_ST"/>
    <property type="match status" value="1"/>
</dbReference>
<comment type="function">
    <text evidence="2 7 8">Protein kinase which is involved in the control of centrosome separation and bipolar spindle formation in mitotic cells and chromatin condensation in meiotic cells. Regulates centrosome separation (essential for the formation of bipolar spindles and high-fidelity chromosome separation) by phosphorylating centrosomal proteins such as CROCC, CEP250 and NINL, resulting in their displacement from the centrosomes. Regulates kinetochore microtubule attachment stability in mitosis via phosphorylation of NDC80. Involved in regulation of mitotic checkpoint protein complex via phosphorylation of CDC20 and MAD2L1. Plays an active role in chromatin condensation during the first meiotic division through phosphorylation of HMGA2. Phosphorylates: PPP1CC; SGO1; NECAB3 and NPM1. Essential for localization of MAD2L1 to kinetochore and MAPK1 and NPM1 to the centrosome. Phosphorylates CEP68 and CNTLN directly or indirectly (By similarity). NEK2-mediated phosphorylation of CEP68 promotes CEP68 dissociation from the centrosome and its degradation at the onset of mitosis (By similarity). Phosphorylates and activates NEK11 in G1/S-arrested cells. Involved in the regulation of centrosome disjunction (By similarity).</text>
</comment>
<comment type="catalytic activity">
    <reaction>
        <text>L-seryl-[protein] + ATP = O-phospho-L-seryl-[protein] + ADP + H(+)</text>
        <dbReference type="Rhea" id="RHEA:17989"/>
        <dbReference type="Rhea" id="RHEA-COMP:9863"/>
        <dbReference type="Rhea" id="RHEA-COMP:11604"/>
        <dbReference type="ChEBI" id="CHEBI:15378"/>
        <dbReference type="ChEBI" id="CHEBI:29999"/>
        <dbReference type="ChEBI" id="CHEBI:30616"/>
        <dbReference type="ChEBI" id="CHEBI:83421"/>
        <dbReference type="ChEBI" id="CHEBI:456216"/>
        <dbReference type="EC" id="2.7.11.1"/>
    </reaction>
</comment>
<comment type="catalytic activity">
    <reaction>
        <text>L-threonyl-[protein] + ATP = O-phospho-L-threonyl-[protein] + ADP + H(+)</text>
        <dbReference type="Rhea" id="RHEA:46608"/>
        <dbReference type="Rhea" id="RHEA-COMP:11060"/>
        <dbReference type="Rhea" id="RHEA-COMP:11605"/>
        <dbReference type="ChEBI" id="CHEBI:15378"/>
        <dbReference type="ChEBI" id="CHEBI:30013"/>
        <dbReference type="ChEBI" id="CHEBI:30616"/>
        <dbReference type="ChEBI" id="CHEBI:61977"/>
        <dbReference type="ChEBI" id="CHEBI:456216"/>
        <dbReference type="EC" id="2.7.11.1"/>
    </reaction>
</comment>
<comment type="cofactor">
    <cofactor>
        <name>Mg(2+)</name>
        <dbReference type="ChEBI" id="CHEBI:18420"/>
    </cofactor>
</comment>
<comment type="activity regulation">
    <text evidence="2">Its catalytic activity is inhibited by the inhibitor CCT241950. In the presence of this inhibitor, displays an autoinhibited conformation: Tyr-70 side chain points into the active site, interacts with the activation loop, and blocks the alphaC helix.</text>
</comment>
<comment type="subunit">
    <text evidence="2 7 8">Forms homodimers and heterodimers. Interacts with CDC20, CTNB1, MAD1L1, MAD2L1, MAPK, NEK11, NPM1, NDC80, PCNT, PPP1CA, PPP1CC and SGO1. Interacts with STK3/MST2 (via SARAH domain) and SAV1 (via SARAH domain) (By similarity). Interacts with NECAB3 and HMGA2 (PubMed:14668482, PubMed:14697346). Interacts with CEP68; the interaction leads to phosphorylation of CEP68. Interacts with CNTLN; the interaction leads to phosphorylation of CNTLN. Interacts with CEP85 (By similarity).</text>
</comment>
<comment type="subcellular location">
    <subcellularLocation>
        <location evidence="9">Nucleus</location>
    </subcellularLocation>
    <subcellularLocation>
        <location evidence="2">Nucleus</location>
        <location evidence="2">Nucleolus</location>
    </subcellularLocation>
    <subcellularLocation>
        <location evidence="1">Cytoplasm</location>
    </subcellularLocation>
    <subcellularLocation>
        <location evidence="2">Cytoplasm</location>
        <location evidence="2">Cytoskeleton</location>
        <location evidence="2">Microtubule organizing center</location>
        <location evidence="2">Centrosome</location>
    </subcellularLocation>
    <subcellularLocation>
        <location evidence="1">Cytoplasm</location>
        <location evidence="1">Cytoskeleton</location>
        <location evidence="1">Spindle pole</location>
    </subcellularLocation>
    <subcellularLocation>
        <location evidence="1">Chromosome</location>
        <location evidence="1">Centromere</location>
        <location evidence="1">Kinetochore</location>
    </subcellularLocation>
    <subcellularLocation>
        <location evidence="9">Chromosome</location>
        <location evidence="9">Centromere</location>
    </subcellularLocation>
    <text evidence="1">STK3/MST2 and SAV1 are required for its targeting to the centrosome. Colocalizes with SGO1 and MAD1L1 at the kinetochore. Not associated with kinetochore in the interphase but becomes associated with it upon the breakdown of the nuclear envelope. Has a nucleolar targeting/ retention activity via a coiled-coil domain at the C-terminal end (By similarity).</text>
</comment>
<comment type="tissue specificity">
    <text evidence="9 10">Most abundantly expressed in testis. Low levels found in mid-gestation embryo, ovary, placenta, intestine, thymus and skin. Within the testis, expression restricted to germ cells with highest levels detected in spermatocytes at pachytene and diplotene stages. Also expressed in meiotic pachytene oocytes.</text>
</comment>
<comment type="domain">
    <text evidence="2">The leucine-zipper domain is required for its dimerization and activation.</text>
</comment>
<comment type="PTM">
    <text evidence="2">Activated by autophosphorylation. Protein phosphatase 1 represses autophosphorylation and activation of isoform 1 by dephosphorylation. Phosphorylation by STK3/MST2 is necessary for its localization to the centrosome.</text>
</comment>
<comment type="similarity">
    <text evidence="11">Belongs to the protein kinase superfamily. NEK Ser/Thr protein kinase family. NIMA subfamily.</text>
</comment>
<accession>O35942</accession>
<accession>O35959</accession>
<accession>Q3TPD7</accession>
<reference key="1">
    <citation type="journal article" date="1997" name="Development">
        <title>The NIMA-related kinase 2, Nek2, is expressed in specific stages of the meiotic cell cycle and associates with meiotic chromosomes.</title>
        <authorList>
            <person name="Rhee K."/>
            <person name="Wolgemuth D.J."/>
        </authorList>
    </citation>
    <scope>NUCLEOTIDE SEQUENCE [MRNA]</scope>
    <scope>SUBCELLULAR LOCATION</scope>
    <scope>TISSUE SPECIFICITY</scope>
    <source>
        <strain>Swiss Webster</strain>
        <tissue>Testis</tissue>
    </source>
</reference>
<reference key="2">
    <citation type="journal article" date="1998" name="Oncogene">
        <title>Murine NIMA-related kinases are expressed in patterns suggesting distinct functions in gametogenesis and a role in the nervous system.</title>
        <authorList>
            <person name="Arama E."/>
            <person name="Yanai A."/>
            <person name="Kilfin G."/>
            <person name="Motro B."/>
        </authorList>
    </citation>
    <scope>NUCLEOTIDE SEQUENCE [MRNA]</scope>
</reference>
<reference key="3">
    <citation type="journal article" date="1997" name="Exp. Cell Res.">
        <title>The in vivo expression pattern of mouse Nek2, a NIMA-related kinase, indicates a role in both mitosis and meiosis.</title>
        <authorList>
            <person name="Tanaka K."/>
            <person name="Parvinen M."/>
            <person name="Nigg E.A."/>
        </authorList>
    </citation>
    <scope>NUCLEOTIDE SEQUENCE [MRNA]</scope>
    <scope>TISSUE SPECIFICITY</scope>
    <source>
        <tissue>Brain</tissue>
    </source>
</reference>
<reference key="4">
    <citation type="journal article" date="2005" name="Science">
        <title>The transcriptional landscape of the mammalian genome.</title>
        <authorList>
            <person name="Carninci P."/>
            <person name="Kasukawa T."/>
            <person name="Katayama S."/>
            <person name="Gough J."/>
            <person name="Frith M.C."/>
            <person name="Maeda N."/>
            <person name="Oyama R."/>
            <person name="Ravasi T."/>
            <person name="Lenhard B."/>
            <person name="Wells C."/>
            <person name="Kodzius R."/>
            <person name="Shimokawa K."/>
            <person name="Bajic V.B."/>
            <person name="Brenner S.E."/>
            <person name="Batalov S."/>
            <person name="Forrest A.R."/>
            <person name="Zavolan M."/>
            <person name="Davis M.J."/>
            <person name="Wilming L.G."/>
            <person name="Aidinis V."/>
            <person name="Allen J.E."/>
            <person name="Ambesi-Impiombato A."/>
            <person name="Apweiler R."/>
            <person name="Aturaliya R.N."/>
            <person name="Bailey T.L."/>
            <person name="Bansal M."/>
            <person name="Baxter L."/>
            <person name="Beisel K.W."/>
            <person name="Bersano T."/>
            <person name="Bono H."/>
            <person name="Chalk A.M."/>
            <person name="Chiu K.P."/>
            <person name="Choudhary V."/>
            <person name="Christoffels A."/>
            <person name="Clutterbuck D.R."/>
            <person name="Crowe M.L."/>
            <person name="Dalla E."/>
            <person name="Dalrymple B.P."/>
            <person name="de Bono B."/>
            <person name="Della Gatta G."/>
            <person name="di Bernardo D."/>
            <person name="Down T."/>
            <person name="Engstrom P."/>
            <person name="Fagiolini M."/>
            <person name="Faulkner G."/>
            <person name="Fletcher C.F."/>
            <person name="Fukushima T."/>
            <person name="Furuno M."/>
            <person name="Futaki S."/>
            <person name="Gariboldi M."/>
            <person name="Georgii-Hemming P."/>
            <person name="Gingeras T.R."/>
            <person name="Gojobori T."/>
            <person name="Green R.E."/>
            <person name="Gustincich S."/>
            <person name="Harbers M."/>
            <person name="Hayashi Y."/>
            <person name="Hensch T.K."/>
            <person name="Hirokawa N."/>
            <person name="Hill D."/>
            <person name="Huminiecki L."/>
            <person name="Iacono M."/>
            <person name="Ikeo K."/>
            <person name="Iwama A."/>
            <person name="Ishikawa T."/>
            <person name="Jakt M."/>
            <person name="Kanapin A."/>
            <person name="Katoh M."/>
            <person name="Kawasawa Y."/>
            <person name="Kelso J."/>
            <person name="Kitamura H."/>
            <person name="Kitano H."/>
            <person name="Kollias G."/>
            <person name="Krishnan S.P."/>
            <person name="Kruger A."/>
            <person name="Kummerfeld S.K."/>
            <person name="Kurochkin I.V."/>
            <person name="Lareau L.F."/>
            <person name="Lazarevic D."/>
            <person name="Lipovich L."/>
            <person name="Liu J."/>
            <person name="Liuni S."/>
            <person name="McWilliam S."/>
            <person name="Madan Babu M."/>
            <person name="Madera M."/>
            <person name="Marchionni L."/>
            <person name="Matsuda H."/>
            <person name="Matsuzawa S."/>
            <person name="Miki H."/>
            <person name="Mignone F."/>
            <person name="Miyake S."/>
            <person name="Morris K."/>
            <person name="Mottagui-Tabar S."/>
            <person name="Mulder N."/>
            <person name="Nakano N."/>
            <person name="Nakauchi H."/>
            <person name="Ng P."/>
            <person name="Nilsson R."/>
            <person name="Nishiguchi S."/>
            <person name="Nishikawa S."/>
            <person name="Nori F."/>
            <person name="Ohara O."/>
            <person name="Okazaki Y."/>
            <person name="Orlando V."/>
            <person name="Pang K.C."/>
            <person name="Pavan W.J."/>
            <person name="Pavesi G."/>
            <person name="Pesole G."/>
            <person name="Petrovsky N."/>
            <person name="Piazza S."/>
            <person name="Reed J."/>
            <person name="Reid J.F."/>
            <person name="Ring B.Z."/>
            <person name="Ringwald M."/>
            <person name="Rost B."/>
            <person name="Ruan Y."/>
            <person name="Salzberg S.L."/>
            <person name="Sandelin A."/>
            <person name="Schneider C."/>
            <person name="Schoenbach C."/>
            <person name="Sekiguchi K."/>
            <person name="Semple C.A."/>
            <person name="Seno S."/>
            <person name="Sessa L."/>
            <person name="Sheng Y."/>
            <person name="Shibata Y."/>
            <person name="Shimada H."/>
            <person name="Shimada K."/>
            <person name="Silva D."/>
            <person name="Sinclair B."/>
            <person name="Sperling S."/>
            <person name="Stupka E."/>
            <person name="Sugiura K."/>
            <person name="Sultana R."/>
            <person name="Takenaka Y."/>
            <person name="Taki K."/>
            <person name="Tammoja K."/>
            <person name="Tan S.L."/>
            <person name="Tang S."/>
            <person name="Taylor M.S."/>
            <person name="Tegner J."/>
            <person name="Teichmann S.A."/>
            <person name="Ueda H.R."/>
            <person name="van Nimwegen E."/>
            <person name="Verardo R."/>
            <person name="Wei C.L."/>
            <person name="Yagi K."/>
            <person name="Yamanishi H."/>
            <person name="Zabarovsky E."/>
            <person name="Zhu S."/>
            <person name="Zimmer A."/>
            <person name="Hide W."/>
            <person name="Bult C."/>
            <person name="Grimmond S.M."/>
            <person name="Teasdale R.D."/>
            <person name="Liu E.T."/>
            <person name="Brusic V."/>
            <person name="Quackenbush J."/>
            <person name="Wahlestedt C."/>
            <person name="Mattick J.S."/>
            <person name="Hume D.A."/>
            <person name="Kai C."/>
            <person name="Sasaki D."/>
            <person name="Tomaru Y."/>
            <person name="Fukuda S."/>
            <person name="Kanamori-Katayama M."/>
            <person name="Suzuki M."/>
            <person name="Aoki J."/>
            <person name="Arakawa T."/>
            <person name="Iida J."/>
            <person name="Imamura K."/>
            <person name="Itoh M."/>
            <person name="Kato T."/>
            <person name="Kawaji H."/>
            <person name="Kawagashira N."/>
            <person name="Kawashima T."/>
            <person name="Kojima M."/>
            <person name="Kondo S."/>
            <person name="Konno H."/>
            <person name="Nakano K."/>
            <person name="Ninomiya N."/>
            <person name="Nishio T."/>
            <person name="Okada M."/>
            <person name="Plessy C."/>
            <person name="Shibata K."/>
            <person name="Shiraki T."/>
            <person name="Suzuki S."/>
            <person name="Tagami M."/>
            <person name="Waki K."/>
            <person name="Watahiki A."/>
            <person name="Okamura-Oho Y."/>
            <person name="Suzuki H."/>
            <person name="Kawai J."/>
            <person name="Hayashizaki Y."/>
        </authorList>
    </citation>
    <scope>NUCLEOTIDE SEQUENCE [LARGE SCALE MRNA]</scope>
    <source>
        <strain>C57BL/6J</strain>
        <tissue>Eye</tissue>
        <tissue>Heart</tissue>
    </source>
</reference>
<reference key="5">
    <citation type="journal article" date="2004" name="Exp. Cell Res.">
        <title>NIP1/XB51/NECAB3 is a potential substrate of Nek2, suggesting specific roles of Nek2 in Golgi.</title>
        <authorList>
            <person name="Yoo J.C."/>
            <person name="Chang J.R."/>
            <person name="Kim S.H."/>
            <person name="Jang S.K."/>
            <person name="Wolgemuth D.J."/>
            <person name="Kim K."/>
            <person name="Rhee K."/>
        </authorList>
    </citation>
    <scope>FUNCTION</scope>
    <scope>INTERACTION WITH NECAB3</scope>
</reference>
<reference key="6">
    <citation type="journal article" date="2004" name="Mol. Biol. Cell">
        <title>Phosphorylation of high-mobility group protein A2 by Nek2 kinase during the first meiotic division in mouse spermatocytes.</title>
        <authorList>
            <person name="Di Agostino S."/>
            <person name="Fedele M."/>
            <person name="Chieffi P."/>
            <person name="Fusco A."/>
            <person name="Rossi P."/>
            <person name="Geremia R."/>
            <person name="Sette C."/>
        </authorList>
    </citation>
    <scope>FUNCTION</scope>
    <scope>INTERACTION WITH HMGA2</scope>
</reference>
<evidence type="ECO:0000250" key="1"/>
<evidence type="ECO:0000250" key="2">
    <source>
        <dbReference type="UniProtKB" id="P51955"/>
    </source>
</evidence>
<evidence type="ECO:0000255" key="3"/>
<evidence type="ECO:0000255" key="4">
    <source>
        <dbReference type="PROSITE-ProRule" id="PRU00159"/>
    </source>
</evidence>
<evidence type="ECO:0000255" key="5">
    <source>
        <dbReference type="PROSITE-ProRule" id="PRU10027"/>
    </source>
</evidence>
<evidence type="ECO:0000256" key="6">
    <source>
        <dbReference type="SAM" id="MobiDB-lite"/>
    </source>
</evidence>
<evidence type="ECO:0000269" key="7">
    <source>
    </source>
</evidence>
<evidence type="ECO:0000269" key="8">
    <source>
    </source>
</evidence>
<evidence type="ECO:0000269" key="9">
    <source>
    </source>
</evidence>
<evidence type="ECO:0000269" key="10">
    <source>
    </source>
</evidence>
<evidence type="ECO:0000305" key="11"/>
<sequence>MPSRVEDYEVLHSIGTGSYGRCQKIRRKSDGKILVWKELDYGSMTEVEKQMLVSEVNLLRELKHPNIVSYYDRIIDRTNTTLYIVMEYCEGGDLASVISKGTKDRQYLEEEFVLRVMTQLTLALKECHRRSDGGHTVLHRDLKPANVFLDSKHNVKLGDFGLARILNHDTSFAKTFVGTPYYMSPEQMSCLSYNEKSDIWSLGCLLYELCALMPPFTAFNQKELAGKIREGRFRRIPYRYSDGLNDLITRMLNLKDYHRPSVEEILESPLIADLVAEEQRRNLERRGRRSGEPSKLPDSSPVLSELKLKERQLQDREQALRAREDILEQKERELCIRERLAEDKLARAESLMKNYSLLKEHRLLCLAGGPELDLPSSAMKKKVHFHGESKENTARSENSESYLAKSKCRDLKKRLHAAQLRAQALADIEKNYQLKSRQILGMR</sequence>